<comment type="function">
    <text evidence="1">Binds directly to 23S ribosomal RNA and is necessary for the in vitro assembly process of the 50S ribosomal subunit. It is not involved in the protein synthesizing functions of that subunit.</text>
</comment>
<comment type="subcellular location">
    <subcellularLocation>
        <location>Plastid</location>
        <location>Chloroplast</location>
    </subcellularLocation>
</comment>
<comment type="similarity">
    <text evidence="1">Belongs to the bacterial ribosomal protein bL20 family.</text>
</comment>
<dbReference type="EMBL" id="DQ630521">
    <property type="protein sequence ID" value="ABF60184.1"/>
    <property type="molecule type" value="Genomic_DNA"/>
</dbReference>
<dbReference type="RefSeq" id="YP_764380.1">
    <property type="nucleotide sequence ID" value="NC_008372.1"/>
</dbReference>
<dbReference type="SMR" id="Q06SI6"/>
<dbReference type="GeneID" id="4308364"/>
<dbReference type="GO" id="GO:0009507">
    <property type="term" value="C:chloroplast"/>
    <property type="evidence" value="ECO:0007669"/>
    <property type="project" value="UniProtKB-SubCell"/>
</dbReference>
<dbReference type="GO" id="GO:1990904">
    <property type="term" value="C:ribonucleoprotein complex"/>
    <property type="evidence" value="ECO:0007669"/>
    <property type="project" value="UniProtKB-KW"/>
</dbReference>
<dbReference type="GO" id="GO:0005840">
    <property type="term" value="C:ribosome"/>
    <property type="evidence" value="ECO:0007669"/>
    <property type="project" value="UniProtKB-KW"/>
</dbReference>
<dbReference type="GO" id="GO:0019843">
    <property type="term" value="F:rRNA binding"/>
    <property type="evidence" value="ECO:0007669"/>
    <property type="project" value="UniProtKB-UniRule"/>
</dbReference>
<dbReference type="GO" id="GO:0003735">
    <property type="term" value="F:structural constituent of ribosome"/>
    <property type="evidence" value="ECO:0007669"/>
    <property type="project" value="InterPro"/>
</dbReference>
<dbReference type="GO" id="GO:0000027">
    <property type="term" value="P:ribosomal large subunit assembly"/>
    <property type="evidence" value="ECO:0007669"/>
    <property type="project" value="UniProtKB-UniRule"/>
</dbReference>
<dbReference type="GO" id="GO:0006412">
    <property type="term" value="P:translation"/>
    <property type="evidence" value="ECO:0007669"/>
    <property type="project" value="InterPro"/>
</dbReference>
<dbReference type="CDD" id="cd07026">
    <property type="entry name" value="Ribosomal_L20"/>
    <property type="match status" value="1"/>
</dbReference>
<dbReference type="FunFam" id="1.10.1900.20:FF:000001">
    <property type="entry name" value="50S ribosomal protein L20"/>
    <property type="match status" value="1"/>
</dbReference>
<dbReference type="Gene3D" id="6.10.160.10">
    <property type="match status" value="1"/>
</dbReference>
<dbReference type="Gene3D" id="1.10.1900.20">
    <property type="entry name" value="Ribosomal protein L20"/>
    <property type="match status" value="1"/>
</dbReference>
<dbReference type="HAMAP" id="MF_00382">
    <property type="entry name" value="Ribosomal_bL20"/>
    <property type="match status" value="1"/>
</dbReference>
<dbReference type="InterPro" id="IPR005813">
    <property type="entry name" value="Ribosomal_bL20"/>
</dbReference>
<dbReference type="InterPro" id="IPR049946">
    <property type="entry name" value="RIBOSOMAL_L20_CS"/>
</dbReference>
<dbReference type="InterPro" id="IPR035566">
    <property type="entry name" value="Ribosomal_protein_bL20_C"/>
</dbReference>
<dbReference type="NCBIfam" id="TIGR01032">
    <property type="entry name" value="rplT_bact"/>
    <property type="match status" value="1"/>
</dbReference>
<dbReference type="PANTHER" id="PTHR10986">
    <property type="entry name" value="39S RIBOSOMAL PROTEIN L20"/>
    <property type="match status" value="1"/>
</dbReference>
<dbReference type="Pfam" id="PF00453">
    <property type="entry name" value="Ribosomal_L20"/>
    <property type="match status" value="1"/>
</dbReference>
<dbReference type="PRINTS" id="PR00062">
    <property type="entry name" value="RIBOSOMALL20"/>
</dbReference>
<dbReference type="SUPFAM" id="SSF74731">
    <property type="entry name" value="Ribosomal protein L20"/>
    <property type="match status" value="1"/>
</dbReference>
<dbReference type="PROSITE" id="PS00937">
    <property type="entry name" value="RIBOSOMAL_L20"/>
    <property type="match status" value="1"/>
</dbReference>
<evidence type="ECO:0000255" key="1">
    <source>
        <dbReference type="HAMAP-Rule" id="MF_00382"/>
    </source>
</evidence>
<evidence type="ECO:0000305" key="2"/>
<organism>
    <name type="scientific">Stigeoclonium helveticum</name>
    <name type="common">Green alga</name>
    <dbReference type="NCBI Taxonomy" id="55999"/>
    <lineage>
        <taxon>Eukaryota</taxon>
        <taxon>Viridiplantae</taxon>
        <taxon>Chlorophyta</taxon>
        <taxon>core chlorophytes</taxon>
        <taxon>Chlorophyceae</taxon>
        <taxon>OCC clade</taxon>
        <taxon>Chaetophorales</taxon>
        <taxon>Chaetophoraceae</taxon>
        <taxon>Stigeoclonium</taxon>
    </lineage>
</organism>
<sequence>MTRVKRGIVARKRRKKILNYTKGFRGAASKLFRTANQRYMKALKLSFVNRRKKKRDFRSLWISRLNAAVRKNGLNYNEFIFALKICNINLNRKTLSQISICDPQTFNLLYDTLKPLLIKHLNTK</sequence>
<feature type="chain" id="PRO_0000276431" description="Large ribosomal subunit protein bL20c">
    <location>
        <begin position="1"/>
        <end position="124"/>
    </location>
</feature>
<accession>Q06SI6</accession>
<reference key="1">
    <citation type="journal article" date="2006" name="Mol. Genet. Genomics">
        <title>Distinctive architecture of the chloroplast genome in the chlorophycean green alga Stigeoclonium helveticum.</title>
        <authorList>
            <person name="Belanger A.-S."/>
            <person name="Brouard J.-S."/>
            <person name="Charlebois P."/>
            <person name="Otis C."/>
            <person name="Lemieux C."/>
            <person name="Turmel M."/>
        </authorList>
    </citation>
    <scope>NUCLEOTIDE SEQUENCE [LARGE SCALE GENOMIC DNA]</scope>
    <source>
        <strain>UTEX 441</strain>
    </source>
</reference>
<protein>
    <recommendedName>
        <fullName evidence="1">Large ribosomal subunit protein bL20c</fullName>
    </recommendedName>
    <alternativeName>
        <fullName evidence="2">50S ribosomal protein L20, chloroplastic</fullName>
    </alternativeName>
</protein>
<geneLocation type="chloroplast"/>
<gene>
    <name evidence="1" type="primary">rpl20</name>
</gene>
<name>RK20_STIHE</name>
<proteinExistence type="inferred from homology"/>
<keyword id="KW-0150">Chloroplast</keyword>
<keyword id="KW-0934">Plastid</keyword>
<keyword id="KW-0687">Ribonucleoprotein</keyword>
<keyword id="KW-0689">Ribosomal protein</keyword>
<keyword id="KW-0694">RNA-binding</keyword>
<keyword id="KW-0699">rRNA-binding</keyword>